<organism>
    <name type="scientific">Eremothecium gossypii (strain ATCC 10895 / CBS 109.51 / FGSC 9923 / NRRL Y-1056)</name>
    <name type="common">Yeast</name>
    <name type="synonym">Ashbya gossypii</name>
    <dbReference type="NCBI Taxonomy" id="284811"/>
    <lineage>
        <taxon>Eukaryota</taxon>
        <taxon>Fungi</taxon>
        <taxon>Dikarya</taxon>
        <taxon>Ascomycota</taxon>
        <taxon>Saccharomycotina</taxon>
        <taxon>Saccharomycetes</taxon>
        <taxon>Saccharomycetales</taxon>
        <taxon>Saccharomycetaceae</taxon>
        <taxon>Eremothecium</taxon>
    </lineage>
</organism>
<keyword id="KW-0010">Activator</keyword>
<keyword id="KW-0067">ATP-binding</keyword>
<keyword id="KW-0158">Chromosome</keyword>
<keyword id="KW-0963">Cytoplasm</keyword>
<keyword id="KW-0378">Hydrolase</keyword>
<keyword id="KW-0418">Kinase</keyword>
<keyword id="KW-0547">Nucleotide-binding</keyword>
<keyword id="KW-0539">Nucleus</keyword>
<keyword id="KW-0597">Phosphoprotein</keyword>
<keyword id="KW-1185">Reference proteome</keyword>
<keyword id="KW-0723">Serine/threonine-protein kinase</keyword>
<keyword id="KW-0779">Telomere</keyword>
<keyword id="KW-0804">Transcription</keyword>
<keyword id="KW-0805">Transcription regulation</keyword>
<keyword id="KW-0808">Transferase</keyword>
<keyword id="KW-0819">tRNA processing</keyword>
<evidence type="ECO:0000250" key="1">
    <source>
        <dbReference type="UniProtKB" id="P53323"/>
    </source>
</evidence>
<evidence type="ECO:0000250" key="2">
    <source>
        <dbReference type="UniProtKB" id="Q9UYB9"/>
    </source>
</evidence>
<evidence type="ECO:0000255" key="3">
    <source>
        <dbReference type="PROSITE-ProRule" id="PRU00159"/>
    </source>
</evidence>
<evidence type="ECO:0000255" key="4">
    <source>
        <dbReference type="PROSITE-ProRule" id="PRU10028"/>
    </source>
</evidence>
<evidence type="ECO:0000305" key="5"/>
<name>BUD32_EREGS</name>
<protein>
    <recommendedName>
        <fullName>EKC/KEOPS complex subunit BUD32</fullName>
        <ecNumber evidence="2">3.6.-.-</ecNumber>
    </recommendedName>
    <alternativeName>
        <fullName>Atypical serine/threonine protein kinase BUD32</fullName>
        <ecNumber evidence="1">2.7.11.1</ecNumber>
    </alternativeName>
</protein>
<proteinExistence type="inferred from homology"/>
<reference key="1">
    <citation type="journal article" date="2004" name="Science">
        <title>The Ashbya gossypii genome as a tool for mapping the ancient Saccharomyces cerevisiae genome.</title>
        <authorList>
            <person name="Dietrich F.S."/>
            <person name="Voegeli S."/>
            <person name="Brachat S."/>
            <person name="Lerch A."/>
            <person name="Gates K."/>
            <person name="Steiner S."/>
            <person name="Mohr C."/>
            <person name="Poehlmann R."/>
            <person name="Luedi P."/>
            <person name="Choi S."/>
            <person name="Wing R.A."/>
            <person name="Flavier A."/>
            <person name="Gaffney T.D."/>
            <person name="Philippsen P."/>
        </authorList>
    </citation>
    <scope>NUCLEOTIDE SEQUENCE [LARGE SCALE GENOMIC DNA]</scope>
    <source>
        <strain>ATCC 10895 / CBS 109.51 / FGSC 9923 / NRRL Y-1056</strain>
    </source>
</reference>
<reference key="2">
    <citation type="journal article" date="2013" name="G3 (Bethesda)">
        <title>Genomes of Ashbya fungi isolated from insects reveal four mating-type loci, numerous translocations, lack of transposons, and distinct gene duplications.</title>
        <authorList>
            <person name="Dietrich F.S."/>
            <person name="Voegeli S."/>
            <person name="Kuo S."/>
            <person name="Philippsen P."/>
        </authorList>
    </citation>
    <scope>GENOME REANNOTATION</scope>
    <source>
        <strain>ATCC 10895 / CBS 109.51 / FGSC 9923 / NRRL Y-1056</strain>
    </source>
</reference>
<feature type="chain" id="PRO_0000278904" description="EKC/KEOPS complex subunit BUD32">
    <location>
        <begin position="1"/>
        <end position="260"/>
    </location>
</feature>
<feature type="domain" description="Protein kinase" evidence="3">
    <location>
        <begin position="16"/>
        <end position="260"/>
    </location>
</feature>
<feature type="active site" description="Proton acceptor" evidence="3 4">
    <location>
        <position position="160"/>
    </location>
</feature>
<feature type="binding site" evidence="3">
    <location>
        <begin position="22"/>
        <end position="30"/>
    </location>
    <ligand>
        <name>ATP</name>
        <dbReference type="ChEBI" id="CHEBI:30616"/>
    </ligand>
</feature>
<feature type="binding site" evidence="3">
    <location>
        <position position="51"/>
    </location>
    <ligand>
        <name>ATP</name>
        <dbReference type="ChEBI" id="CHEBI:30616"/>
    </ligand>
</feature>
<sequence length="260" mass="29235">MSAEVISRVSQIYGEGITLTPISQGAEAVIFTTTTHPYLPSTEGSSKYVVKYRPPKTYRHPSIDVALTKQRTLGEARLLGKLQQIKGLRVPKLLACDVYNGSIWMEFLGEDLPESRGFSNLKNFLWMCASEPYSPVVEATVRDVGCQIGLLHWNDYCHGDLTTSNIVLVRSGAEWAPHLIDFGLGSNSNLVEDKGVDLYVLERALASTHSAFAEKYFEWLMEGFTSVYQSHGEKGEQKLKELLRRFEEVRLRGRKRSMLG</sequence>
<dbReference type="EC" id="3.6.-.-" evidence="2"/>
<dbReference type="EC" id="2.7.11.1" evidence="1"/>
<dbReference type="EMBL" id="AE016820">
    <property type="protein sequence ID" value="AAS54821.1"/>
    <property type="molecule type" value="Genomic_DNA"/>
</dbReference>
<dbReference type="RefSeq" id="NP_986997.1">
    <property type="nucleotide sequence ID" value="NM_212059.1"/>
</dbReference>
<dbReference type="SMR" id="Q74Z75"/>
<dbReference type="FunCoup" id="Q74Z75">
    <property type="interactions" value="904"/>
</dbReference>
<dbReference type="STRING" id="284811.Q74Z75"/>
<dbReference type="EnsemblFungi" id="AAS54821">
    <property type="protein sequence ID" value="AAS54821"/>
    <property type="gene ID" value="AGOS_AGR331C"/>
</dbReference>
<dbReference type="GeneID" id="4623300"/>
<dbReference type="KEGG" id="ago:AGOS_AGR331C"/>
<dbReference type="eggNOG" id="KOG3087">
    <property type="taxonomic scope" value="Eukaryota"/>
</dbReference>
<dbReference type="HOGENOM" id="CLU_063953_1_1_1"/>
<dbReference type="InParanoid" id="Q74Z75"/>
<dbReference type="OMA" id="HKLYMEY"/>
<dbReference type="OrthoDB" id="3399at2759"/>
<dbReference type="Proteomes" id="UP000000591">
    <property type="component" value="Chromosome VII"/>
</dbReference>
<dbReference type="GO" id="GO:0000781">
    <property type="term" value="C:chromosome, telomeric region"/>
    <property type="evidence" value="ECO:0007669"/>
    <property type="project" value="UniProtKB-SubCell"/>
</dbReference>
<dbReference type="GO" id="GO:0005829">
    <property type="term" value="C:cytosol"/>
    <property type="evidence" value="ECO:0000318"/>
    <property type="project" value="GO_Central"/>
</dbReference>
<dbReference type="GO" id="GO:0000408">
    <property type="term" value="C:EKC/KEOPS complex"/>
    <property type="evidence" value="ECO:0000318"/>
    <property type="project" value="GO_Central"/>
</dbReference>
<dbReference type="GO" id="GO:0005634">
    <property type="term" value="C:nucleus"/>
    <property type="evidence" value="ECO:0000318"/>
    <property type="project" value="GO_Central"/>
</dbReference>
<dbReference type="GO" id="GO:0005524">
    <property type="term" value="F:ATP binding"/>
    <property type="evidence" value="ECO:0007669"/>
    <property type="project" value="UniProtKB-KW"/>
</dbReference>
<dbReference type="GO" id="GO:0016887">
    <property type="term" value="F:ATP hydrolysis activity"/>
    <property type="evidence" value="ECO:0007669"/>
    <property type="project" value="EnsemblFungi"/>
</dbReference>
<dbReference type="GO" id="GO:0106310">
    <property type="term" value="F:protein serine kinase activity"/>
    <property type="evidence" value="ECO:0007669"/>
    <property type="project" value="RHEA"/>
</dbReference>
<dbReference type="GO" id="GO:0004674">
    <property type="term" value="F:protein serine/threonine kinase activity"/>
    <property type="evidence" value="ECO:0000318"/>
    <property type="project" value="GO_Central"/>
</dbReference>
<dbReference type="GO" id="GO:0045944">
    <property type="term" value="P:positive regulation of transcription by RNA polymerase II"/>
    <property type="evidence" value="ECO:0007669"/>
    <property type="project" value="EnsemblFungi"/>
</dbReference>
<dbReference type="GO" id="GO:0000722">
    <property type="term" value="P:telomere maintenance via recombination"/>
    <property type="evidence" value="ECO:0007669"/>
    <property type="project" value="EnsemblFungi"/>
</dbReference>
<dbReference type="GO" id="GO:0008033">
    <property type="term" value="P:tRNA processing"/>
    <property type="evidence" value="ECO:0007669"/>
    <property type="project" value="UniProtKB-KW"/>
</dbReference>
<dbReference type="GO" id="GO:0070525">
    <property type="term" value="P:tRNA threonylcarbamoyladenosine metabolic process"/>
    <property type="evidence" value="ECO:0000318"/>
    <property type="project" value="GO_Central"/>
</dbReference>
<dbReference type="FunFam" id="1.10.510.10:FF:000745">
    <property type="entry name" value="Serine/threonine-protein kinase BUD32"/>
    <property type="match status" value="1"/>
</dbReference>
<dbReference type="FunFam" id="3.30.200.20:FF:000639">
    <property type="entry name" value="Serine/threonine-protein kinase BUD32"/>
    <property type="match status" value="1"/>
</dbReference>
<dbReference type="Gene3D" id="3.30.200.20">
    <property type="entry name" value="Phosphorylase Kinase, domain 1"/>
    <property type="match status" value="1"/>
</dbReference>
<dbReference type="Gene3D" id="1.10.510.10">
    <property type="entry name" value="Transferase(Phosphotransferase) domain 1"/>
    <property type="match status" value="1"/>
</dbReference>
<dbReference type="InterPro" id="IPR022495">
    <property type="entry name" value="Bud32"/>
</dbReference>
<dbReference type="InterPro" id="IPR011009">
    <property type="entry name" value="Kinase-like_dom_sf"/>
</dbReference>
<dbReference type="InterPro" id="IPR000719">
    <property type="entry name" value="Prot_kinase_dom"/>
</dbReference>
<dbReference type="InterPro" id="IPR008266">
    <property type="entry name" value="Tyr_kinase_AS"/>
</dbReference>
<dbReference type="NCBIfam" id="TIGR03724">
    <property type="entry name" value="arch_bud32"/>
    <property type="match status" value="1"/>
</dbReference>
<dbReference type="PANTHER" id="PTHR12209:SF0">
    <property type="entry name" value="EKC_KEOPS COMPLEX SUBUNIT TP53RK"/>
    <property type="match status" value="1"/>
</dbReference>
<dbReference type="PANTHER" id="PTHR12209">
    <property type="entry name" value="NON-SPECIFIC SERINE/THREONINE PROTEIN KINASE"/>
    <property type="match status" value="1"/>
</dbReference>
<dbReference type="Pfam" id="PF06293">
    <property type="entry name" value="Kdo"/>
    <property type="match status" value="1"/>
</dbReference>
<dbReference type="SUPFAM" id="SSF56112">
    <property type="entry name" value="Protein kinase-like (PK-like)"/>
    <property type="match status" value="1"/>
</dbReference>
<dbReference type="PROSITE" id="PS50011">
    <property type="entry name" value="PROTEIN_KINASE_DOM"/>
    <property type="match status" value="1"/>
</dbReference>
<dbReference type="PROSITE" id="PS00109">
    <property type="entry name" value="PROTEIN_KINASE_TYR"/>
    <property type="match status" value="1"/>
</dbReference>
<accession>Q74Z75</accession>
<gene>
    <name type="primary">BUD32</name>
    <name type="ordered locus">AGR331C</name>
</gene>
<comment type="function">
    <text evidence="1">Component of the EKC/KEOPS complex that is required for the formation of a threonylcarbamoyl group on adenosine at position 37 (t(6)A37) in tRNAs that read codons beginning with adenine. The complex is probably involved in the transfer of the threonylcarbamoyl moiety of threonylcarbamoyl-AMP (TC-AMP) to the N6 group of A37. BUD32 has ATPase activity in the context of the EKC/KEOPS complex and likely plays a supporting role to the catalytic subunit KAE1. The EKC/KEOPS complex also promotes both telomere uncapping and telomere elongation. The complex is required for efficient recruitment of transcriptional coactivators.</text>
</comment>
<comment type="catalytic activity">
    <reaction evidence="1">
        <text>L-seryl-[protein] + ATP = O-phospho-L-seryl-[protein] + ADP + H(+)</text>
        <dbReference type="Rhea" id="RHEA:17989"/>
        <dbReference type="Rhea" id="RHEA-COMP:9863"/>
        <dbReference type="Rhea" id="RHEA-COMP:11604"/>
        <dbReference type="ChEBI" id="CHEBI:15378"/>
        <dbReference type="ChEBI" id="CHEBI:29999"/>
        <dbReference type="ChEBI" id="CHEBI:30616"/>
        <dbReference type="ChEBI" id="CHEBI:83421"/>
        <dbReference type="ChEBI" id="CHEBI:456216"/>
        <dbReference type="EC" id="2.7.11.1"/>
    </reaction>
</comment>
<comment type="catalytic activity">
    <reaction evidence="1">
        <text>L-threonyl-[protein] + ATP = O-phospho-L-threonyl-[protein] + ADP + H(+)</text>
        <dbReference type="Rhea" id="RHEA:46608"/>
        <dbReference type="Rhea" id="RHEA-COMP:11060"/>
        <dbReference type="Rhea" id="RHEA-COMP:11605"/>
        <dbReference type="ChEBI" id="CHEBI:15378"/>
        <dbReference type="ChEBI" id="CHEBI:30013"/>
        <dbReference type="ChEBI" id="CHEBI:30616"/>
        <dbReference type="ChEBI" id="CHEBI:61977"/>
        <dbReference type="ChEBI" id="CHEBI:456216"/>
        <dbReference type="EC" id="2.7.11.1"/>
    </reaction>
</comment>
<comment type="subunit">
    <text evidence="1">Component of the EKC/KEOPS complex composed of at least BUD32, CGI121, GON7, KAE1 and PCC1; the whole complex dimerizes.</text>
</comment>
<comment type="subcellular location">
    <subcellularLocation>
        <location evidence="1">Cytoplasm</location>
    </subcellularLocation>
    <subcellularLocation>
        <location evidence="1">Nucleus</location>
    </subcellularLocation>
    <subcellularLocation>
        <location evidence="1">Chromosome</location>
        <location evidence="1">Telomere</location>
    </subcellularLocation>
</comment>
<comment type="domain">
    <text evidence="1 2">This protein is considered an atypical serine/threonine kinase, because it lacks the conventional structural elements necessary for the substrate recognition as well as a lysine residue that in all other serine/threonine kinases participates in the catalytic event (By similarity). BUD32 has protein kinase activity in vitro, but in the context of the EKC/KEOPS complex, the catalytic subunit KAE1 switches the activity of BUD32 from kinase into ATPase (By similarity).</text>
</comment>
<comment type="similarity">
    <text evidence="5">Belongs to the protein kinase superfamily. BUD32 family.</text>
</comment>